<reference key="1">
    <citation type="journal article" date="1999" name="J. Mammal. Evol.">
        <title>MtDNA evidence for repeated pulses of speciation within arvicoline and murid rodents.</title>
        <authorList>
            <person name="Conroy C.J."/>
            <person name="Cook J.A."/>
        </authorList>
    </citation>
    <scope>NUCLEOTIDE SEQUENCE [GENOMIC DNA]</scope>
    <source>
        <strain>Isolate AF 12726</strain>
    </source>
</reference>
<organism>
    <name type="scientific">Phenacomys intermedius</name>
    <name type="common">Western heather vole</name>
    <dbReference type="NCBI Taxonomy" id="56242"/>
    <lineage>
        <taxon>Eukaryota</taxon>
        <taxon>Metazoa</taxon>
        <taxon>Chordata</taxon>
        <taxon>Craniata</taxon>
        <taxon>Vertebrata</taxon>
        <taxon>Euteleostomi</taxon>
        <taxon>Mammalia</taxon>
        <taxon>Eutheria</taxon>
        <taxon>Euarchontoglires</taxon>
        <taxon>Glires</taxon>
        <taxon>Rodentia</taxon>
        <taxon>Myomorpha</taxon>
        <taxon>Muroidea</taxon>
        <taxon>Cricetidae</taxon>
        <taxon>Arvicolinae</taxon>
        <taxon>Phenacomys</taxon>
    </lineage>
</organism>
<sequence length="380" mass="42781">MTIIRKKHPLIKIINHAFIDLPAPSNISSWWNFGSLLGLCLIIQILTGLFLAMHYTSDTATAFSSVTHICRDVNYGWLIRYMHANGASMFFICLFLHVGRGIYYGSYNMIETWNMGIMLLFAVMATAFMGYVLPWGQMSFWGATVITNLLSAIPYIGTTLVEWIWGGFSVDKATLTRFFAFHFILPFIIVAMVLVHLLFLHETGSNNPSGLNSDADKIPFHPYYTIKDLLGALLLLMGLMILVLFFPDILGDPDNYTPANPLNTPPHIKPEWYFLFAYAILRSIPNKLGGVLALILSILVLALMPFLHTSKQQGLTFRPITQTMYWILVADLLILTWIGGQPVEYPFIMIGQVASIAYFTIIVILMPIAGMIENIILDLE</sequence>
<protein>
    <recommendedName>
        <fullName>Cytochrome b</fullName>
    </recommendedName>
    <alternativeName>
        <fullName>Complex III subunit 3</fullName>
    </alternativeName>
    <alternativeName>
        <fullName>Complex III subunit III</fullName>
    </alternativeName>
    <alternativeName>
        <fullName>Cytochrome b-c1 complex subunit 3</fullName>
    </alternativeName>
    <alternativeName>
        <fullName>Ubiquinol-cytochrome-c reductase complex cytochrome b subunit</fullName>
    </alternativeName>
</protein>
<gene>
    <name type="primary">MT-CYB</name>
    <name type="synonym">COB</name>
    <name type="synonym">CYTB</name>
    <name type="synonym">MTCYB</name>
</gene>
<keyword id="KW-0249">Electron transport</keyword>
<keyword id="KW-0349">Heme</keyword>
<keyword id="KW-0408">Iron</keyword>
<keyword id="KW-0472">Membrane</keyword>
<keyword id="KW-0479">Metal-binding</keyword>
<keyword id="KW-0496">Mitochondrion</keyword>
<keyword id="KW-0999">Mitochondrion inner membrane</keyword>
<keyword id="KW-0679">Respiratory chain</keyword>
<keyword id="KW-0812">Transmembrane</keyword>
<keyword id="KW-1133">Transmembrane helix</keyword>
<keyword id="KW-0813">Transport</keyword>
<keyword id="KW-0830">Ubiquinone</keyword>
<feature type="chain" id="PRO_0000061386" description="Cytochrome b">
    <location>
        <begin position="1"/>
        <end position="380"/>
    </location>
</feature>
<feature type="transmembrane region" description="Helical" evidence="2">
    <location>
        <begin position="33"/>
        <end position="53"/>
    </location>
</feature>
<feature type="transmembrane region" description="Helical" evidence="2">
    <location>
        <begin position="77"/>
        <end position="98"/>
    </location>
</feature>
<feature type="transmembrane region" description="Helical" evidence="2">
    <location>
        <begin position="113"/>
        <end position="133"/>
    </location>
</feature>
<feature type="transmembrane region" description="Helical" evidence="2">
    <location>
        <begin position="178"/>
        <end position="198"/>
    </location>
</feature>
<feature type="transmembrane region" description="Helical" evidence="2">
    <location>
        <begin position="226"/>
        <end position="246"/>
    </location>
</feature>
<feature type="transmembrane region" description="Helical" evidence="2">
    <location>
        <begin position="288"/>
        <end position="308"/>
    </location>
</feature>
<feature type="transmembrane region" description="Helical" evidence="2">
    <location>
        <begin position="320"/>
        <end position="340"/>
    </location>
</feature>
<feature type="transmembrane region" description="Helical" evidence="2">
    <location>
        <begin position="347"/>
        <end position="367"/>
    </location>
</feature>
<feature type="binding site" description="axial binding residue" evidence="2">
    <location>
        <position position="83"/>
    </location>
    <ligand>
        <name>heme b</name>
        <dbReference type="ChEBI" id="CHEBI:60344"/>
        <label>b562</label>
    </ligand>
    <ligandPart>
        <name>Fe</name>
        <dbReference type="ChEBI" id="CHEBI:18248"/>
    </ligandPart>
</feature>
<feature type="binding site" description="axial binding residue" evidence="2">
    <location>
        <position position="97"/>
    </location>
    <ligand>
        <name>heme b</name>
        <dbReference type="ChEBI" id="CHEBI:60344"/>
        <label>b566</label>
    </ligand>
    <ligandPart>
        <name>Fe</name>
        <dbReference type="ChEBI" id="CHEBI:18248"/>
    </ligandPart>
</feature>
<feature type="binding site" description="axial binding residue" evidence="2">
    <location>
        <position position="182"/>
    </location>
    <ligand>
        <name>heme b</name>
        <dbReference type="ChEBI" id="CHEBI:60344"/>
        <label>b562</label>
    </ligand>
    <ligandPart>
        <name>Fe</name>
        <dbReference type="ChEBI" id="CHEBI:18248"/>
    </ligandPart>
</feature>
<feature type="binding site" description="axial binding residue" evidence="2">
    <location>
        <position position="196"/>
    </location>
    <ligand>
        <name>heme b</name>
        <dbReference type="ChEBI" id="CHEBI:60344"/>
        <label>b566</label>
    </ligand>
    <ligandPart>
        <name>Fe</name>
        <dbReference type="ChEBI" id="CHEBI:18248"/>
    </ligandPart>
</feature>
<feature type="binding site" evidence="2">
    <location>
        <position position="201"/>
    </location>
    <ligand>
        <name>a ubiquinone</name>
        <dbReference type="ChEBI" id="CHEBI:16389"/>
    </ligand>
</feature>
<proteinExistence type="inferred from homology"/>
<geneLocation type="mitochondrion"/>
<accession>Q9XNN3</accession>
<evidence type="ECO:0000250" key="1"/>
<evidence type="ECO:0000250" key="2">
    <source>
        <dbReference type="UniProtKB" id="P00157"/>
    </source>
</evidence>
<evidence type="ECO:0000255" key="3">
    <source>
        <dbReference type="PROSITE-ProRule" id="PRU00967"/>
    </source>
</evidence>
<evidence type="ECO:0000255" key="4">
    <source>
        <dbReference type="PROSITE-ProRule" id="PRU00968"/>
    </source>
</evidence>
<dbReference type="EMBL" id="AF119260">
    <property type="protein sequence ID" value="AAD43878.1"/>
    <property type="molecule type" value="Genomic_DNA"/>
</dbReference>
<dbReference type="SMR" id="Q9XNN3"/>
<dbReference type="GO" id="GO:0005743">
    <property type="term" value="C:mitochondrial inner membrane"/>
    <property type="evidence" value="ECO:0007669"/>
    <property type="project" value="UniProtKB-SubCell"/>
</dbReference>
<dbReference type="GO" id="GO:0045275">
    <property type="term" value="C:respiratory chain complex III"/>
    <property type="evidence" value="ECO:0007669"/>
    <property type="project" value="InterPro"/>
</dbReference>
<dbReference type="GO" id="GO:0046872">
    <property type="term" value="F:metal ion binding"/>
    <property type="evidence" value="ECO:0007669"/>
    <property type="project" value="UniProtKB-KW"/>
</dbReference>
<dbReference type="GO" id="GO:0008121">
    <property type="term" value="F:ubiquinol-cytochrome-c reductase activity"/>
    <property type="evidence" value="ECO:0007669"/>
    <property type="project" value="InterPro"/>
</dbReference>
<dbReference type="GO" id="GO:0006122">
    <property type="term" value="P:mitochondrial electron transport, ubiquinol to cytochrome c"/>
    <property type="evidence" value="ECO:0007669"/>
    <property type="project" value="TreeGrafter"/>
</dbReference>
<dbReference type="CDD" id="cd00290">
    <property type="entry name" value="cytochrome_b_C"/>
    <property type="match status" value="1"/>
</dbReference>
<dbReference type="CDD" id="cd00284">
    <property type="entry name" value="Cytochrome_b_N"/>
    <property type="match status" value="1"/>
</dbReference>
<dbReference type="FunFam" id="1.20.810.10:FF:000002">
    <property type="entry name" value="Cytochrome b"/>
    <property type="match status" value="1"/>
</dbReference>
<dbReference type="Gene3D" id="1.20.810.10">
    <property type="entry name" value="Cytochrome Bc1 Complex, Chain C"/>
    <property type="match status" value="1"/>
</dbReference>
<dbReference type="InterPro" id="IPR005798">
    <property type="entry name" value="Cyt_b/b6_C"/>
</dbReference>
<dbReference type="InterPro" id="IPR036150">
    <property type="entry name" value="Cyt_b/b6_C_sf"/>
</dbReference>
<dbReference type="InterPro" id="IPR005797">
    <property type="entry name" value="Cyt_b/b6_N"/>
</dbReference>
<dbReference type="InterPro" id="IPR027387">
    <property type="entry name" value="Cytb/b6-like_sf"/>
</dbReference>
<dbReference type="InterPro" id="IPR030689">
    <property type="entry name" value="Cytochrome_b"/>
</dbReference>
<dbReference type="InterPro" id="IPR048260">
    <property type="entry name" value="Cytochrome_b_C_euk/bac"/>
</dbReference>
<dbReference type="InterPro" id="IPR048259">
    <property type="entry name" value="Cytochrome_b_N_euk/bac"/>
</dbReference>
<dbReference type="InterPro" id="IPR016174">
    <property type="entry name" value="Di-haem_cyt_TM"/>
</dbReference>
<dbReference type="PANTHER" id="PTHR19271">
    <property type="entry name" value="CYTOCHROME B"/>
    <property type="match status" value="1"/>
</dbReference>
<dbReference type="PANTHER" id="PTHR19271:SF16">
    <property type="entry name" value="CYTOCHROME B"/>
    <property type="match status" value="1"/>
</dbReference>
<dbReference type="Pfam" id="PF00032">
    <property type="entry name" value="Cytochrom_B_C"/>
    <property type="match status" value="1"/>
</dbReference>
<dbReference type="Pfam" id="PF00033">
    <property type="entry name" value="Cytochrome_B"/>
    <property type="match status" value="1"/>
</dbReference>
<dbReference type="PIRSF" id="PIRSF038885">
    <property type="entry name" value="COB"/>
    <property type="match status" value="1"/>
</dbReference>
<dbReference type="SUPFAM" id="SSF81648">
    <property type="entry name" value="a domain/subunit of cytochrome bc1 complex (Ubiquinol-cytochrome c reductase)"/>
    <property type="match status" value="1"/>
</dbReference>
<dbReference type="SUPFAM" id="SSF81342">
    <property type="entry name" value="Transmembrane di-heme cytochromes"/>
    <property type="match status" value="1"/>
</dbReference>
<dbReference type="PROSITE" id="PS51003">
    <property type="entry name" value="CYTB_CTER"/>
    <property type="match status" value="1"/>
</dbReference>
<dbReference type="PROSITE" id="PS51002">
    <property type="entry name" value="CYTB_NTER"/>
    <property type="match status" value="1"/>
</dbReference>
<name>CYB_PHEIN</name>
<comment type="function">
    <text evidence="2">Component of the ubiquinol-cytochrome c reductase complex (complex III or cytochrome b-c1 complex) that is part of the mitochondrial respiratory chain. The b-c1 complex mediates electron transfer from ubiquinol to cytochrome c. Contributes to the generation of a proton gradient across the mitochondrial membrane that is then used for ATP synthesis.</text>
</comment>
<comment type="cofactor">
    <cofactor evidence="2">
        <name>heme b</name>
        <dbReference type="ChEBI" id="CHEBI:60344"/>
    </cofactor>
    <text evidence="2">Binds 2 heme b groups non-covalently.</text>
</comment>
<comment type="subunit">
    <text evidence="2">The cytochrome bc1 complex contains 11 subunits: 3 respiratory subunits (MT-CYB, CYC1 and UQCRFS1), 2 core proteins (UQCRC1 and UQCRC2) and 6 low-molecular weight proteins (UQCRH/QCR6, UQCRB/QCR7, UQCRQ/QCR8, UQCR10/QCR9, UQCR11/QCR10 and a cleavage product of UQCRFS1). This cytochrome bc1 complex then forms a dimer.</text>
</comment>
<comment type="subcellular location">
    <subcellularLocation>
        <location evidence="2">Mitochondrion inner membrane</location>
        <topology evidence="2">Multi-pass membrane protein</topology>
    </subcellularLocation>
</comment>
<comment type="miscellaneous">
    <text evidence="1">Heme 1 (or BL or b562) is low-potential and absorbs at about 562 nm, and heme 2 (or BH or b566) is high-potential and absorbs at about 566 nm.</text>
</comment>
<comment type="similarity">
    <text evidence="3 4">Belongs to the cytochrome b family.</text>
</comment>
<comment type="caution">
    <text evidence="2">The full-length protein contains only eight transmembrane helices, not nine as predicted by bioinformatics tools.</text>
</comment>